<accession>C3PKY4</accession>
<name>TRPD_CORA7</name>
<sequence length="345" mass="36309">MTDNKALKILQEFLDISEPTLEQAIEVFTPLTVGEYDDIHIAALLTHIRTRGETFADVAGAARAFLNAGHPFPITGKGLMDTAGTGGDGANTINVTTGASLVASAGGVKMVKHGNRSVSSKSGSADVLEALGIPLNLDPDRAVRQLEASNFTFLFAPAYNPAVAHVQPVRKGLGISTLFNTMGPLLSPGRPEFQIMGIANPEQGQLIAEVFKDLGRTRALVVHGAGTDEIAVHGTTQVWELRDGTISHYELTPEDLGISHHELADLAGGNGEENAKALRAVFAGTGEPAHHDAIAATAGAMFYLNGTTDSIHEGVTHADQLIKNGTVAAWLKKHEEANYGSADRA</sequence>
<evidence type="ECO:0000255" key="1">
    <source>
        <dbReference type="HAMAP-Rule" id="MF_00211"/>
    </source>
</evidence>
<gene>
    <name evidence="1" type="primary">trpD</name>
    <name type="ordered locus">cauri_2509</name>
</gene>
<comment type="function">
    <text evidence="1">Catalyzes the transfer of the phosphoribosyl group of 5-phosphorylribose-1-pyrophosphate (PRPP) to anthranilate to yield N-(5'-phosphoribosyl)-anthranilate (PRA).</text>
</comment>
<comment type="catalytic activity">
    <reaction evidence="1">
        <text>N-(5-phospho-beta-D-ribosyl)anthranilate + diphosphate = 5-phospho-alpha-D-ribose 1-diphosphate + anthranilate</text>
        <dbReference type="Rhea" id="RHEA:11768"/>
        <dbReference type="ChEBI" id="CHEBI:16567"/>
        <dbReference type="ChEBI" id="CHEBI:18277"/>
        <dbReference type="ChEBI" id="CHEBI:33019"/>
        <dbReference type="ChEBI" id="CHEBI:58017"/>
        <dbReference type="EC" id="2.4.2.18"/>
    </reaction>
</comment>
<comment type="cofactor">
    <cofactor evidence="1">
        <name>Mg(2+)</name>
        <dbReference type="ChEBI" id="CHEBI:18420"/>
    </cofactor>
    <text evidence="1">Binds 2 magnesium ions per monomer.</text>
</comment>
<comment type="pathway">
    <text evidence="1">Amino-acid biosynthesis; L-tryptophan biosynthesis; L-tryptophan from chorismate: step 2/5.</text>
</comment>
<comment type="subunit">
    <text evidence="1">Homodimer.</text>
</comment>
<comment type="similarity">
    <text evidence="1">Belongs to the anthranilate phosphoribosyltransferase family.</text>
</comment>
<organism>
    <name type="scientific">Corynebacterium aurimucosum (strain ATCC 700975 / DSM 44827 / CIP 107346 / CN-1)</name>
    <name type="common">Corynebacterium nigricans</name>
    <dbReference type="NCBI Taxonomy" id="548476"/>
    <lineage>
        <taxon>Bacteria</taxon>
        <taxon>Bacillati</taxon>
        <taxon>Actinomycetota</taxon>
        <taxon>Actinomycetes</taxon>
        <taxon>Mycobacteriales</taxon>
        <taxon>Corynebacteriaceae</taxon>
        <taxon>Corynebacterium</taxon>
    </lineage>
</organism>
<dbReference type="EC" id="2.4.2.18" evidence="1"/>
<dbReference type="EMBL" id="CP001601">
    <property type="protein sequence ID" value="ACP34100.1"/>
    <property type="molecule type" value="Genomic_DNA"/>
</dbReference>
<dbReference type="RefSeq" id="WP_010188010.1">
    <property type="nucleotide sequence ID" value="NC_012590.1"/>
</dbReference>
<dbReference type="SMR" id="C3PKY4"/>
<dbReference type="STRING" id="548476.cauri_2509"/>
<dbReference type="GeneID" id="31925156"/>
<dbReference type="KEGG" id="car:cauri_2509"/>
<dbReference type="eggNOG" id="COG0547">
    <property type="taxonomic scope" value="Bacteria"/>
</dbReference>
<dbReference type="HOGENOM" id="CLU_034315_2_1_11"/>
<dbReference type="OrthoDB" id="9806430at2"/>
<dbReference type="UniPathway" id="UPA00035">
    <property type="reaction ID" value="UER00041"/>
</dbReference>
<dbReference type="Proteomes" id="UP000002077">
    <property type="component" value="Chromosome"/>
</dbReference>
<dbReference type="GO" id="GO:0005829">
    <property type="term" value="C:cytosol"/>
    <property type="evidence" value="ECO:0007669"/>
    <property type="project" value="TreeGrafter"/>
</dbReference>
<dbReference type="GO" id="GO:0004048">
    <property type="term" value="F:anthranilate phosphoribosyltransferase activity"/>
    <property type="evidence" value="ECO:0007669"/>
    <property type="project" value="UniProtKB-UniRule"/>
</dbReference>
<dbReference type="GO" id="GO:0000287">
    <property type="term" value="F:magnesium ion binding"/>
    <property type="evidence" value="ECO:0007669"/>
    <property type="project" value="UniProtKB-UniRule"/>
</dbReference>
<dbReference type="GO" id="GO:0000162">
    <property type="term" value="P:L-tryptophan biosynthetic process"/>
    <property type="evidence" value="ECO:0007669"/>
    <property type="project" value="UniProtKB-UniRule"/>
</dbReference>
<dbReference type="FunFam" id="3.40.1030.10:FF:000002">
    <property type="entry name" value="Anthranilate phosphoribosyltransferase"/>
    <property type="match status" value="1"/>
</dbReference>
<dbReference type="Gene3D" id="3.40.1030.10">
    <property type="entry name" value="Nucleoside phosphorylase/phosphoribosyltransferase catalytic domain"/>
    <property type="match status" value="1"/>
</dbReference>
<dbReference type="Gene3D" id="1.20.970.10">
    <property type="entry name" value="Transferase, Pyrimidine Nucleoside Phosphorylase, Chain C"/>
    <property type="match status" value="1"/>
</dbReference>
<dbReference type="HAMAP" id="MF_00211">
    <property type="entry name" value="TrpD"/>
    <property type="match status" value="1"/>
</dbReference>
<dbReference type="InterPro" id="IPR005940">
    <property type="entry name" value="Anthranilate_Pribosyl_Tfrase"/>
</dbReference>
<dbReference type="InterPro" id="IPR000312">
    <property type="entry name" value="Glycosyl_Trfase_fam3"/>
</dbReference>
<dbReference type="InterPro" id="IPR017459">
    <property type="entry name" value="Glycosyl_Trfase_fam3_N_dom"/>
</dbReference>
<dbReference type="InterPro" id="IPR036320">
    <property type="entry name" value="Glycosyl_Trfase_fam3_N_dom_sf"/>
</dbReference>
<dbReference type="InterPro" id="IPR035902">
    <property type="entry name" value="Nuc_phospho_transferase"/>
</dbReference>
<dbReference type="NCBIfam" id="TIGR01245">
    <property type="entry name" value="trpD"/>
    <property type="match status" value="1"/>
</dbReference>
<dbReference type="PANTHER" id="PTHR43285">
    <property type="entry name" value="ANTHRANILATE PHOSPHORIBOSYLTRANSFERASE"/>
    <property type="match status" value="1"/>
</dbReference>
<dbReference type="PANTHER" id="PTHR43285:SF2">
    <property type="entry name" value="ANTHRANILATE PHOSPHORIBOSYLTRANSFERASE"/>
    <property type="match status" value="1"/>
</dbReference>
<dbReference type="Pfam" id="PF02885">
    <property type="entry name" value="Glycos_trans_3N"/>
    <property type="match status" value="1"/>
</dbReference>
<dbReference type="Pfam" id="PF00591">
    <property type="entry name" value="Glycos_transf_3"/>
    <property type="match status" value="1"/>
</dbReference>
<dbReference type="SUPFAM" id="SSF52418">
    <property type="entry name" value="Nucleoside phosphorylase/phosphoribosyltransferase catalytic domain"/>
    <property type="match status" value="1"/>
</dbReference>
<dbReference type="SUPFAM" id="SSF47648">
    <property type="entry name" value="Nucleoside phosphorylase/phosphoribosyltransferase N-terminal domain"/>
    <property type="match status" value="1"/>
</dbReference>
<reference key="1">
    <citation type="journal article" date="2010" name="BMC Genomics">
        <title>Complete genome sequence and lifestyle of black-pigmented Corynebacterium aurimucosum ATCC 700975 (formerly C. nigricans CN-1) isolated from a vaginal swab of a woman with spontaneous abortion.</title>
        <authorList>
            <person name="Trost E."/>
            <person name="Gotker S."/>
            <person name="Schneider J."/>
            <person name="Schneiker-Bekel S."/>
            <person name="Szczepanowski R."/>
            <person name="Tilker A."/>
            <person name="Viehoever P."/>
            <person name="Arnold W."/>
            <person name="Bekel T."/>
            <person name="Blom J."/>
            <person name="Gartemann K.H."/>
            <person name="Linke B."/>
            <person name="Goesmann A."/>
            <person name="Puhler A."/>
            <person name="Shukla S.K."/>
            <person name="Tauch A."/>
        </authorList>
    </citation>
    <scope>NUCLEOTIDE SEQUENCE [LARGE SCALE GENOMIC DNA]</scope>
    <source>
        <strain>ATCC 700975 / DSM 44827 / CIP 107346 / CN-1</strain>
    </source>
</reference>
<keyword id="KW-0028">Amino-acid biosynthesis</keyword>
<keyword id="KW-0057">Aromatic amino acid biosynthesis</keyword>
<keyword id="KW-0328">Glycosyltransferase</keyword>
<keyword id="KW-0460">Magnesium</keyword>
<keyword id="KW-0479">Metal-binding</keyword>
<keyword id="KW-1185">Reference proteome</keyword>
<keyword id="KW-0808">Transferase</keyword>
<keyword id="KW-0822">Tryptophan biosynthesis</keyword>
<feature type="chain" id="PRO_1000198817" description="Anthranilate phosphoribosyltransferase">
    <location>
        <begin position="1"/>
        <end position="345"/>
    </location>
</feature>
<feature type="binding site" evidence="1">
    <location>
        <position position="84"/>
    </location>
    <ligand>
        <name>5-phospho-alpha-D-ribose 1-diphosphate</name>
        <dbReference type="ChEBI" id="CHEBI:58017"/>
    </ligand>
</feature>
<feature type="binding site" evidence="1">
    <location>
        <position position="84"/>
    </location>
    <ligand>
        <name>anthranilate</name>
        <dbReference type="ChEBI" id="CHEBI:16567"/>
        <label>1</label>
    </ligand>
</feature>
<feature type="binding site" evidence="1">
    <location>
        <begin position="87"/>
        <end position="88"/>
    </location>
    <ligand>
        <name>5-phospho-alpha-D-ribose 1-diphosphate</name>
        <dbReference type="ChEBI" id="CHEBI:58017"/>
    </ligand>
</feature>
<feature type="binding site" evidence="1">
    <location>
        <position position="92"/>
    </location>
    <ligand>
        <name>5-phospho-alpha-D-ribose 1-diphosphate</name>
        <dbReference type="ChEBI" id="CHEBI:58017"/>
    </ligand>
</feature>
<feature type="binding site" evidence="1">
    <location>
        <begin position="94"/>
        <end position="97"/>
    </location>
    <ligand>
        <name>5-phospho-alpha-D-ribose 1-diphosphate</name>
        <dbReference type="ChEBI" id="CHEBI:58017"/>
    </ligand>
</feature>
<feature type="binding site" evidence="1">
    <location>
        <position position="96"/>
    </location>
    <ligand>
        <name>Mg(2+)</name>
        <dbReference type="ChEBI" id="CHEBI:18420"/>
        <label>1</label>
    </ligand>
</feature>
<feature type="binding site" evidence="1">
    <location>
        <begin position="112"/>
        <end position="120"/>
    </location>
    <ligand>
        <name>5-phospho-alpha-D-ribose 1-diphosphate</name>
        <dbReference type="ChEBI" id="CHEBI:58017"/>
    </ligand>
</feature>
<feature type="binding site" evidence="1">
    <location>
        <position position="115"/>
    </location>
    <ligand>
        <name>anthranilate</name>
        <dbReference type="ChEBI" id="CHEBI:16567"/>
        <label>1</label>
    </ligand>
</feature>
<feature type="binding site" evidence="1">
    <location>
        <position position="124"/>
    </location>
    <ligand>
        <name>5-phospho-alpha-D-ribose 1-diphosphate</name>
        <dbReference type="ChEBI" id="CHEBI:58017"/>
    </ligand>
</feature>
<feature type="binding site" evidence="1">
    <location>
        <position position="170"/>
    </location>
    <ligand>
        <name>anthranilate</name>
        <dbReference type="ChEBI" id="CHEBI:16567"/>
        <label>2</label>
    </ligand>
</feature>
<feature type="binding site" evidence="1">
    <location>
        <position position="228"/>
    </location>
    <ligand>
        <name>Mg(2+)</name>
        <dbReference type="ChEBI" id="CHEBI:18420"/>
        <label>2</label>
    </ligand>
</feature>
<feature type="binding site" evidence="1">
    <location>
        <position position="229"/>
    </location>
    <ligand>
        <name>Mg(2+)</name>
        <dbReference type="ChEBI" id="CHEBI:18420"/>
        <label>1</label>
    </ligand>
</feature>
<feature type="binding site" evidence="1">
    <location>
        <position position="229"/>
    </location>
    <ligand>
        <name>Mg(2+)</name>
        <dbReference type="ChEBI" id="CHEBI:18420"/>
        <label>2</label>
    </ligand>
</feature>
<proteinExistence type="inferred from homology"/>
<protein>
    <recommendedName>
        <fullName evidence="1">Anthranilate phosphoribosyltransferase</fullName>
        <ecNumber evidence="1">2.4.2.18</ecNumber>
    </recommendedName>
</protein>